<feature type="chain" id="PRO_0000351816" description="Protein-L-isoaspartate O-methyltransferase">
    <location>
        <begin position="1"/>
        <end position="218"/>
    </location>
</feature>
<feature type="active site" evidence="1">
    <location>
        <position position="69"/>
    </location>
</feature>
<proteinExistence type="inferred from homology"/>
<name>PIMT_AROAE</name>
<gene>
    <name evidence="1" type="primary">pcm</name>
    <name type="ordered locus">AZOSEA04060</name>
    <name type="ORF">ebA781</name>
</gene>
<comment type="function">
    <text evidence="1">Catalyzes the methyl esterification of L-isoaspartyl residues in peptides and proteins that result from spontaneous decomposition of normal L-aspartyl and L-asparaginyl residues. It plays a role in the repair and/or degradation of damaged proteins.</text>
</comment>
<comment type="catalytic activity">
    <reaction evidence="1">
        <text>[protein]-L-isoaspartate + S-adenosyl-L-methionine = [protein]-L-isoaspartate alpha-methyl ester + S-adenosyl-L-homocysteine</text>
        <dbReference type="Rhea" id="RHEA:12705"/>
        <dbReference type="Rhea" id="RHEA-COMP:12143"/>
        <dbReference type="Rhea" id="RHEA-COMP:12144"/>
        <dbReference type="ChEBI" id="CHEBI:57856"/>
        <dbReference type="ChEBI" id="CHEBI:59789"/>
        <dbReference type="ChEBI" id="CHEBI:90596"/>
        <dbReference type="ChEBI" id="CHEBI:90598"/>
        <dbReference type="EC" id="2.1.1.77"/>
    </reaction>
</comment>
<comment type="subcellular location">
    <subcellularLocation>
        <location evidence="1">Cytoplasm</location>
    </subcellularLocation>
</comment>
<comment type="similarity">
    <text evidence="1">Belongs to the methyltransferase superfamily. L-isoaspartyl/D-aspartyl protein methyltransferase family.</text>
</comment>
<accession>Q5P833</accession>
<dbReference type="EC" id="2.1.1.77" evidence="1"/>
<dbReference type="EMBL" id="CR555306">
    <property type="protein sequence ID" value="CAI06528.1"/>
    <property type="molecule type" value="Genomic_DNA"/>
</dbReference>
<dbReference type="RefSeq" id="WP_011236262.1">
    <property type="nucleotide sequence ID" value="NC_006513.1"/>
</dbReference>
<dbReference type="SMR" id="Q5P833"/>
<dbReference type="STRING" id="76114.ebA781"/>
<dbReference type="KEGG" id="eba:ebA781"/>
<dbReference type="eggNOG" id="COG2518">
    <property type="taxonomic scope" value="Bacteria"/>
</dbReference>
<dbReference type="HOGENOM" id="CLU_055432_2_0_4"/>
<dbReference type="OrthoDB" id="9810066at2"/>
<dbReference type="Proteomes" id="UP000006552">
    <property type="component" value="Chromosome"/>
</dbReference>
<dbReference type="GO" id="GO:0005737">
    <property type="term" value="C:cytoplasm"/>
    <property type="evidence" value="ECO:0007669"/>
    <property type="project" value="UniProtKB-SubCell"/>
</dbReference>
<dbReference type="GO" id="GO:0004719">
    <property type="term" value="F:protein-L-isoaspartate (D-aspartate) O-methyltransferase activity"/>
    <property type="evidence" value="ECO:0007669"/>
    <property type="project" value="UniProtKB-UniRule"/>
</dbReference>
<dbReference type="GO" id="GO:0032259">
    <property type="term" value="P:methylation"/>
    <property type="evidence" value="ECO:0007669"/>
    <property type="project" value="UniProtKB-KW"/>
</dbReference>
<dbReference type="GO" id="GO:0036211">
    <property type="term" value="P:protein modification process"/>
    <property type="evidence" value="ECO:0007669"/>
    <property type="project" value="UniProtKB-UniRule"/>
</dbReference>
<dbReference type="GO" id="GO:0030091">
    <property type="term" value="P:protein repair"/>
    <property type="evidence" value="ECO:0007669"/>
    <property type="project" value="UniProtKB-UniRule"/>
</dbReference>
<dbReference type="CDD" id="cd02440">
    <property type="entry name" value="AdoMet_MTases"/>
    <property type="match status" value="1"/>
</dbReference>
<dbReference type="FunFam" id="3.40.50.150:FF:000010">
    <property type="entry name" value="Protein-L-isoaspartate O-methyltransferase"/>
    <property type="match status" value="1"/>
</dbReference>
<dbReference type="Gene3D" id="3.40.50.150">
    <property type="entry name" value="Vaccinia Virus protein VP39"/>
    <property type="match status" value="1"/>
</dbReference>
<dbReference type="HAMAP" id="MF_00090">
    <property type="entry name" value="PIMT"/>
    <property type="match status" value="1"/>
</dbReference>
<dbReference type="InterPro" id="IPR000682">
    <property type="entry name" value="PCMT"/>
</dbReference>
<dbReference type="InterPro" id="IPR029063">
    <property type="entry name" value="SAM-dependent_MTases_sf"/>
</dbReference>
<dbReference type="NCBIfam" id="TIGR00080">
    <property type="entry name" value="pimt"/>
    <property type="match status" value="1"/>
</dbReference>
<dbReference type="NCBIfam" id="NF001453">
    <property type="entry name" value="PRK00312.1"/>
    <property type="match status" value="1"/>
</dbReference>
<dbReference type="PANTHER" id="PTHR11579">
    <property type="entry name" value="PROTEIN-L-ISOASPARTATE O-METHYLTRANSFERASE"/>
    <property type="match status" value="1"/>
</dbReference>
<dbReference type="PANTHER" id="PTHR11579:SF0">
    <property type="entry name" value="PROTEIN-L-ISOASPARTATE(D-ASPARTATE) O-METHYLTRANSFERASE"/>
    <property type="match status" value="1"/>
</dbReference>
<dbReference type="Pfam" id="PF01135">
    <property type="entry name" value="PCMT"/>
    <property type="match status" value="1"/>
</dbReference>
<dbReference type="SUPFAM" id="SSF53335">
    <property type="entry name" value="S-adenosyl-L-methionine-dependent methyltransferases"/>
    <property type="match status" value="1"/>
</dbReference>
<dbReference type="PROSITE" id="PS01279">
    <property type="entry name" value="PCMT"/>
    <property type="match status" value="1"/>
</dbReference>
<evidence type="ECO:0000255" key="1">
    <source>
        <dbReference type="HAMAP-Rule" id="MF_00090"/>
    </source>
</evidence>
<reference key="1">
    <citation type="journal article" date="2005" name="Arch. Microbiol.">
        <title>The genome sequence of an anaerobic aromatic-degrading denitrifying bacterium, strain EbN1.</title>
        <authorList>
            <person name="Rabus R."/>
            <person name="Kube M."/>
            <person name="Heider J."/>
            <person name="Beck A."/>
            <person name="Heitmann K."/>
            <person name="Widdel F."/>
            <person name="Reinhardt R."/>
        </authorList>
    </citation>
    <scope>NUCLEOTIDE SEQUENCE [LARGE SCALE GENOMIC DNA]</scope>
    <source>
        <strain>DSM 19018 / LMG 30748 / EbN1</strain>
    </source>
</reference>
<sequence>MSMRPPDPGQASSRARARMVERLRAQGIADEKVLAAMMQIPRHAFVDEGLAFSAYDDTALPIGYQQTISQPLVVARMIEILRAGRELGRTLEVGAGCGYQAAVLSLVATEVFAVERIRPLLDRARENLRPLRLPNVRLKYADGNLGLPEAAPFDTIIVAAAAAGIPGSLKEQLAPGGRLMIPLGSADQRLVMTERHGNIFRESRFEAVRFVPLLTGTE</sequence>
<keyword id="KW-0963">Cytoplasm</keyword>
<keyword id="KW-0489">Methyltransferase</keyword>
<keyword id="KW-1185">Reference proteome</keyword>
<keyword id="KW-0949">S-adenosyl-L-methionine</keyword>
<keyword id="KW-0808">Transferase</keyword>
<organism>
    <name type="scientific">Aromatoleum aromaticum (strain DSM 19018 / LMG 30748 / EbN1)</name>
    <name type="common">Azoarcus sp. (strain EbN1)</name>
    <dbReference type="NCBI Taxonomy" id="76114"/>
    <lineage>
        <taxon>Bacteria</taxon>
        <taxon>Pseudomonadati</taxon>
        <taxon>Pseudomonadota</taxon>
        <taxon>Betaproteobacteria</taxon>
        <taxon>Rhodocyclales</taxon>
        <taxon>Rhodocyclaceae</taxon>
        <taxon>Aromatoleum</taxon>
    </lineage>
</organism>
<protein>
    <recommendedName>
        <fullName evidence="1">Protein-L-isoaspartate O-methyltransferase</fullName>
        <ecNumber evidence="1">2.1.1.77</ecNumber>
    </recommendedName>
    <alternativeName>
        <fullName evidence="1">L-isoaspartyl protein carboxyl methyltransferase</fullName>
    </alternativeName>
    <alternativeName>
        <fullName evidence="1">Protein L-isoaspartyl methyltransferase</fullName>
    </alternativeName>
    <alternativeName>
        <fullName evidence="1">Protein-beta-aspartate methyltransferase</fullName>
        <shortName evidence="1">PIMT</shortName>
    </alternativeName>
</protein>